<comment type="similarity">
    <text evidence="2">Belongs to the PNMA family.</text>
</comment>
<evidence type="ECO:0000256" key="1">
    <source>
        <dbReference type="SAM" id="MobiDB-lite"/>
    </source>
</evidence>
<evidence type="ECO:0000305" key="2"/>
<dbReference type="EMBL" id="BC151672">
    <property type="protein sequence ID" value="AAI51673.1"/>
    <property type="molecule type" value="mRNA"/>
</dbReference>
<dbReference type="RefSeq" id="NP_001095982.1">
    <property type="nucleotide sequence ID" value="NM_001102512.1"/>
</dbReference>
<dbReference type="FunCoup" id="A7E321">
    <property type="interactions" value="174"/>
</dbReference>
<dbReference type="STRING" id="9913.ENSBTAP00000012291"/>
<dbReference type="PaxDb" id="9913-ENSBTAP00000012291"/>
<dbReference type="Ensembl" id="ENSBTAT00000012291.7">
    <property type="protein sequence ID" value="ENSBTAP00000012291.5"/>
    <property type="gene ID" value="ENSBTAG00000009337.7"/>
</dbReference>
<dbReference type="GeneID" id="532062"/>
<dbReference type="KEGG" id="bta:532062"/>
<dbReference type="CTD" id="55228"/>
<dbReference type="VEuPathDB" id="HostDB:ENSBTAG00000009337"/>
<dbReference type="VGNC" id="VGNC:33085">
    <property type="gene designation" value="PNMA8A"/>
</dbReference>
<dbReference type="eggNOG" id="ENOG502TEDX">
    <property type="taxonomic scope" value="Eukaryota"/>
</dbReference>
<dbReference type="GeneTree" id="ENSGT01030000234522"/>
<dbReference type="HOGENOM" id="CLU_050538_0_0_1"/>
<dbReference type="InParanoid" id="A7E321"/>
<dbReference type="OMA" id="WEDVVHL"/>
<dbReference type="OrthoDB" id="115435at2759"/>
<dbReference type="TreeFam" id="TF335054"/>
<dbReference type="Proteomes" id="UP000009136">
    <property type="component" value="Chromosome 18"/>
</dbReference>
<dbReference type="Bgee" id="ENSBTAG00000009337">
    <property type="expression patterns" value="Expressed in corpus epididymis and 91 other cell types or tissues"/>
</dbReference>
<dbReference type="InterPro" id="IPR049131">
    <property type="entry name" value="PNM8A_C"/>
</dbReference>
<dbReference type="InterPro" id="IPR026523">
    <property type="entry name" value="PNMA"/>
</dbReference>
<dbReference type="InterPro" id="IPR048271">
    <property type="entry name" value="PNMA_N"/>
</dbReference>
<dbReference type="PANTHER" id="PTHR23095">
    <property type="entry name" value="PARANEOPLASTIC ANTIGEN"/>
    <property type="match status" value="1"/>
</dbReference>
<dbReference type="PANTHER" id="PTHR23095:SF21">
    <property type="entry name" value="PARANEOPLASTIC ANTIGEN-LIKE PROTEIN 8A"/>
    <property type="match status" value="1"/>
</dbReference>
<dbReference type="Pfam" id="PF20847">
    <property type="entry name" value="PNM8A"/>
    <property type="match status" value="1"/>
</dbReference>
<dbReference type="Pfam" id="PF20846">
    <property type="entry name" value="PNMA_N"/>
    <property type="match status" value="1"/>
</dbReference>
<reference key="1">
    <citation type="submission" date="2007-08" db="EMBL/GenBank/DDBJ databases">
        <authorList>
            <consortium name="NIH - Mammalian Gene Collection (MGC) project"/>
        </authorList>
    </citation>
    <scope>NUCLEOTIDE SEQUENCE [LARGE SCALE MRNA]</scope>
    <source>
        <strain>Hereford</strain>
        <tissue>Uterus</tissue>
    </source>
</reference>
<feature type="chain" id="PRO_0000325835" description="Paraneoplastic antigen-like protein 8A">
    <location>
        <begin position="1"/>
        <end position="471"/>
    </location>
</feature>
<feature type="region of interest" description="Disordered" evidence="1">
    <location>
        <begin position="188"/>
        <end position="300"/>
    </location>
</feature>
<feature type="region of interest" description="Disordered" evidence="1">
    <location>
        <begin position="321"/>
        <end position="471"/>
    </location>
</feature>
<feature type="compositionally biased region" description="Basic residues" evidence="1">
    <location>
        <begin position="238"/>
        <end position="247"/>
    </location>
</feature>
<feature type="compositionally biased region" description="Low complexity" evidence="1">
    <location>
        <begin position="256"/>
        <end position="269"/>
    </location>
</feature>
<feature type="compositionally biased region" description="Basic and acidic residues" evidence="1">
    <location>
        <begin position="270"/>
        <end position="287"/>
    </location>
</feature>
<proteinExistence type="evidence at transcript level"/>
<organism>
    <name type="scientific">Bos taurus</name>
    <name type="common">Bovine</name>
    <dbReference type="NCBI Taxonomy" id="9913"/>
    <lineage>
        <taxon>Eukaryota</taxon>
        <taxon>Metazoa</taxon>
        <taxon>Chordata</taxon>
        <taxon>Craniata</taxon>
        <taxon>Vertebrata</taxon>
        <taxon>Euteleostomi</taxon>
        <taxon>Mammalia</taxon>
        <taxon>Eutheria</taxon>
        <taxon>Laurasiatheria</taxon>
        <taxon>Artiodactyla</taxon>
        <taxon>Ruminantia</taxon>
        <taxon>Pecora</taxon>
        <taxon>Bovidae</taxon>
        <taxon>Bovinae</taxon>
        <taxon>Bos</taxon>
    </lineage>
</organism>
<gene>
    <name type="primary">PNMA8A</name>
    <name type="synonym">PNMAL1</name>
</gene>
<sequence length="471" mass="50915">MTMAANLLEDWCRGMEADIHRSLLVTGIPEDCGQAEIEETLNGVLSPLGPYSVLNKIFLRQENAKAALVEVGEGVNLRAIPREFPGRGGIWRVVCRDPTQDAEFLKNLNEFLDAEERTLEDVVHLLELSRASPPKTQNRSTENWAEALGVLLGAVVQIIYYMDAEMLSQEEARAQDLAKAQAVASLASAAGRKVKKEPGRAAERGSALKMENPDGWNDVADGGDGPKPLVRKAGALTHSRRKRQKKTPKQEPVPWKKSQGSHSHSSASLKHPEADDGKNRERLEHVRNNKKPCVKQEGSALKKAPVKCAWKFPSNLPHVAASRGVASESDQDGGLEGPPKKKAMGWVSAKSPAYMRKKKVSLGPVSYVLVNSEDPRKKPGVSKKGPGSGQDAPDQKAPGVPQAHESPTSASQGPEAKPQSPLHASSGENDGRSHLGCVNKWMEGEEQQGKAGAQEPKWAESQMVGEDPSAV</sequence>
<accession>A7E321</accession>
<protein>
    <recommendedName>
        <fullName>Paraneoplastic antigen-like protein 8A</fullName>
    </recommendedName>
    <alternativeName>
        <fullName>PNMA-like protein 1</fullName>
    </alternativeName>
</protein>
<name>PNM8A_BOVIN</name>
<keyword id="KW-1185">Reference proteome</keyword>